<sequence length="346" mass="38714">MAMVSEFLKQAWFIENEEQEYVQTVKSSKGGPGSAVSPYPTFNPSSDVAALHKAIMVKGVDEATIIDILTKRNNAQRQQIKAAYLQETGKPLDETLKKALTGHLEEVVLALLKTPAQFDADELRAAMKGLGTDEDTLIEILASRTNKEIRDINRVYREELKRDLAKDITSDTSGDFRNALLSLAKGDRSEDFGVNEDLADSDARALYEAGERRKGTDVNVFNTILTTRSYPQLRRVFQKYTKYSKHDMNKVLDLELKGDIEKCLTAIVKCATSKPAFFAEKLHQAMKGVGTRHKALIRIMVSRSEIDMNDIKAFYQKMYGISLCQAILDETKGDYEKILVALCGGN</sequence>
<accession>P04083</accession>
<accession>B5BU38</accession>
<protein>
    <recommendedName>
        <fullName>Annexin A1</fullName>
    </recommendedName>
    <alternativeName>
        <fullName>Annexin I</fullName>
    </alternativeName>
    <alternativeName>
        <fullName>Annexin-1</fullName>
    </alternativeName>
    <alternativeName>
        <fullName>Calpactin II</fullName>
    </alternativeName>
    <alternativeName>
        <fullName>Calpactin-2</fullName>
    </alternativeName>
    <alternativeName>
        <fullName>Chromobindin-9</fullName>
    </alternativeName>
    <alternativeName>
        <fullName evidence="22">Lipocortin I</fullName>
    </alternativeName>
    <alternativeName>
        <fullName>Phospholipase A2 inhibitory protein</fullName>
    </alternativeName>
    <alternativeName>
        <fullName>p35</fullName>
    </alternativeName>
    <component>
        <recommendedName>
            <fullName evidence="23">Annexin Ac2-26</fullName>
        </recommendedName>
    </component>
</protein>
<reference key="1">
    <citation type="journal article" date="1986" name="Nature">
        <title>Cloning and expression of human lipocortin, a phospholipase A2 inhibitor with potential anti-inflammatory activity.</title>
        <authorList>
            <person name="Wallner B.P."/>
            <person name="Mattaliano R.J."/>
            <person name="Hession C."/>
            <person name="Cate R.L."/>
            <person name="Tizard R."/>
            <person name="Sinclair L.K."/>
            <person name="Foeller C."/>
            <person name="Chow E.P."/>
            <person name="Browning J.L."/>
            <person name="Ramachandran K.L."/>
            <person name="Pepinsky R.B."/>
        </authorList>
    </citation>
    <scope>NUCLEOTIDE SEQUENCE [MRNA]</scope>
    <scope>FUNCTION</scope>
    <scope>TISSUE SPECIFICITY</scope>
</reference>
<reference key="2">
    <citation type="journal article" date="1991" name="Biochemistry">
        <title>Correlation of gene and protein structure of rat and human lipocortin I.</title>
        <authorList>
            <person name="Kovacic R.T."/>
            <person name="Tizard R."/>
            <person name="Cate R.L."/>
            <person name="Frey A.Z."/>
            <person name="Wallner B.P."/>
        </authorList>
    </citation>
    <scope>NUCLEOTIDE SEQUENCE [GENOMIC DNA]</scope>
</reference>
<reference key="3">
    <citation type="journal article" date="1993" name="Eur. J. Biochem.">
        <title>Structural characterization of a biologically active human lipocortin 1 expressed in Escherichia coli.</title>
        <authorList>
            <person name="Arcone R."/>
            <person name="Arpaia G."/>
            <person name="Ruoppolo M."/>
            <person name="Malorni A."/>
            <person name="Pucci P."/>
            <person name="Marino G."/>
            <person name="Ialenti A."/>
            <person name="di Rosa M."/>
            <person name="Ciliberto G."/>
        </authorList>
    </citation>
    <scope>NUCLEOTIDE SEQUENCE [MRNA]</scope>
    <scope>FUNCTION</scope>
</reference>
<reference key="4">
    <citation type="journal article" date="2008" name="Nat. Methods">
        <title>Human protein factory for converting the transcriptome into an in vitro-expressed proteome.</title>
        <authorList>
            <person name="Goshima N."/>
            <person name="Kawamura Y."/>
            <person name="Fukumoto A."/>
            <person name="Miura A."/>
            <person name="Honma R."/>
            <person name="Satoh R."/>
            <person name="Wakamatsu A."/>
            <person name="Yamamoto J."/>
            <person name="Kimura K."/>
            <person name="Nishikawa T."/>
            <person name="Andoh T."/>
            <person name="Iida Y."/>
            <person name="Ishikawa K."/>
            <person name="Ito E."/>
            <person name="Kagawa N."/>
            <person name="Kaminaga C."/>
            <person name="Kanehori K."/>
            <person name="Kawakami B."/>
            <person name="Kenmochi K."/>
            <person name="Kimura R."/>
            <person name="Kobayashi M."/>
            <person name="Kuroita T."/>
            <person name="Kuwayama H."/>
            <person name="Maruyama Y."/>
            <person name="Matsuo K."/>
            <person name="Minami K."/>
            <person name="Mitsubori M."/>
            <person name="Mori M."/>
            <person name="Morishita R."/>
            <person name="Murase A."/>
            <person name="Nishikawa A."/>
            <person name="Nishikawa S."/>
            <person name="Okamoto T."/>
            <person name="Sakagami N."/>
            <person name="Sakamoto Y."/>
            <person name="Sasaki Y."/>
            <person name="Seki T."/>
            <person name="Sono S."/>
            <person name="Sugiyama A."/>
            <person name="Sumiya T."/>
            <person name="Takayama T."/>
            <person name="Takayama Y."/>
            <person name="Takeda H."/>
            <person name="Togashi T."/>
            <person name="Yahata K."/>
            <person name="Yamada H."/>
            <person name="Yanagisawa Y."/>
            <person name="Endo Y."/>
            <person name="Imamoto F."/>
            <person name="Kisu Y."/>
            <person name="Tanaka S."/>
            <person name="Isogai T."/>
            <person name="Imai J."/>
            <person name="Watanabe S."/>
            <person name="Nomura N."/>
        </authorList>
    </citation>
    <scope>NUCLEOTIDE SEQUENCE [LARGE SCALE MRNA]</scope>
</reference>
<reference key="5">
    <citation type="journal article" date="2004" name="Genome Res.">
        <title>The status, quality, and expansion of the NIH full-length cDNA project: the Mammalian Gene Collection (MGC).</title>
        <authorList>
            <consortium name="The MGC Project Team"/>
        </authorList>
    </citation>
    <scope>NUCLEOTIDE SEQUENCE [LARGE SCALE MRNA]</scope>
    <source>
        <tissue>Cervix</tissue>
        <tissue>Lung</tissue>
    </source>
</reference>
<reference key="6">
    <citation type="journal article" date="1988" name="Biochemistry">
        <title>Location of sites in human lipocortin I that are phosphorylated by protein tyrosine kinases and protein kinases A and C.</title>
        <authorList>
            <person name="Varticovski L."/>
            <person name="Chahwala S.B."/>
            <person name="Whitman M."/>
            <person name="Cantley L."/>
            <person name="Schindler D."/>
            <person name="Chow E.P."/>
            <person name="Sinclair L.K."/>
            <person name="Pepinsky R.B."/>
        </authorList>
    </citation>
    <scope>PARTIAL PROTEIN SEQUENCE</scope>
    <scope>PHOSPHORYLATION AT TYR-21 BY EGFR AND SER-27 BY PKC</scope>
</reference>
<reference key="7">
    <citation type="journal article" date="1987" name="Science">
        <title>Characterization by tandem mass spectrometry of structural modifications in proteins.</title>
        <authorList>
            <person name="Biemann K."/>
            <person name="Scoble H.A."/>
        </authorList>
    </citation>
    <scope>ACETYLATION AT ALA-2</scope>
    <scope>IDENTIFICATION BY MASS SPECTROMETRY</scope>
</reference>
<reference key="8">
    <citation type="journal article" date="1989" name="Biochem. J.">
        <title>A dimeric form of lipocortin-1 in human placenta.</title>
        <authorList>
            <person name="Pepinsky R.B."/>
            <person name="Sinclair L.K."/>
            <person name="Chow E.P."/>
            <person name="O'Brine-Greco B."/>
        </authorList>
    </citation>
    <scope>FUNCTION</scope>
    <scope>DIMERIZATION</scope>
    <scope>SUBUNIT</scope>
    <scope>TISSUE SPECIFICITY</scope>
    <scope>PARTIAL PROTEIN SEQUENCE</scope>
    <scope>PHOSPHORYLATION</scope>
    <scope>SUBCELLULAR LOCATION</scope>
</reference>
<reference key="9">
    <citation type="journal article" date="1996" name="J. Biol. Chem.">
        <title>Calcium-dependent binding of S100C to the N-terminal domain of annexin I.</title>
        <authorList>
            <person name="Mailliard W.S."/>
            <person name="Haigler H.T."/>
            <person name="Schlaepfer D.D."/>
        </authorList>
    </citation>
    <scope>INTERACTION WITH S100A11</scope>
    <scope>FUNCTION</scope>
    <scope>SUBCELLULAR LOCATION</scope>
</reference>
<reference key="10">
    <citation type="journal article" date="2000" name="Cell Biol. Int.">
        <title>Annexin I is stored within gelatinase granules of human neutrophil and mobilized on the cell surface upon adhesion but not phagocytosis.</title>
        <authorList>
            <person name="Perretti M."/>
            <person name="Christian H."/>
            <person name="Wheller S.K."/>
            <person name="Aiello I."/>
            <person name="Mugridge K.G."/>
            <person name="Morris J.F."/>
            <person name="Flower R.J."/>
            <person name="Goulding N.J."/>
        </authorList>
    </citation>
    <scope>SUBCELLULAR LOCATION</scope>
    <scope>TISSUE SPECIFICITY</scope>
</reference>
<reference key="11">
    <citation type="journal article" date="2004" name="J. Biol. Chem.">
        <title>Phosphorylation of annexin I by TRPM7 channel-kinase.</title>
        <authorList>
            <person name="Dorovkov M.V."/>
            <person name="Ryazanov A.G."/>
        </authorList>
    </citation>
    <scope>PHOSPHORYLATION AT SER-5 BY TRPM7</scope>
</reference>
<reference key="12">
    <citation type="journal article" date="2004" name="J. Immunol.">
        <title>An annexin 1 N-terminal peptide activates leukocytes by triggering different members of the formyl peptide receptor family.</title>
        <authorList>
            <person name="Ernst S."/>
            <person name="Lange C."/>
            <person name="Wilbers A."/>
            <person name="Goebeler V."/>
            <person name="Gerke V."/>
            <person name="Rescher U."/>
        </authorList>
    </citation>
    <scope>FUNCTION</scope>
</reference>
<reference key="13">
    <citation type="journal article" date="2007" name="Blood">
        <title>Annexin-1 modulates T-cell activation and differentiation.</title>
        <authorList>
            <person name="D'Acquisto F."/>
            <person name="Merghani A."/>
            <person name="Lecona E."/>
            <person name="Rosignoli G."/>
            <person name="Raza K."/>
            <person name="Buckley C.D."/>
            <person name="Flower R.J."/>
            <person name="Perretti M."/>
        </authorList>
    </citation>
    <scope>FUNCTION</scope>
    <scope>SUBCELLULAR LOCATION</scope>
    <scope>TISSUE SPECIFICITY</scope>
</reference>
<reference key="14">
    <citation type="journal article" date="2008" name="Br. J. Pharmacol.">
        <title>Annexin-A1: a pivotal regulator of the innate and adaptive immune systems.</title>
        <authorList>
            <person name="D'Acquisto F."/>
            <person name="Perretti M."/>
            <person name="Flower R.J."/>
        </authorList>
    </citation>
    <scope>REVIEW</scope>
</reference>
<reference key="15">
    <citation type="journal article" date="2008" name="Proc. Natl. Acad. Sci. U.S.A.">
        <title>A quantitative atlas of mitotic phosphorylation.</title>
        <authorList>
            <person name="Dephoure N."/>
            <person name="Zhou C."/>
            <person name="Villen J."/>
            <person name="Beausoleil S.A."/>
            <person name="Bakalarski C.E."/>
            <person name="Elledge S.J."/>
            <person name="Gygi S.P."/>
        </authorList>
    </citation>
    <scope>IDENTIFICATION BY MASS SPECTROMETRY [LARGE SCALE ANALYSIS]</scope>
    <source>
        <tissue>Cervix carcinoma</tissue>
    </source>
</reference>
<reference key="16">
    <citation type="journal article" date="2009" name="FASEB J.">
        <title>Annexin A1 regulates hormone exocytosis through a mechanism involving actin reorganization.</title>
        <authorList>
            <person name="McArthur S."/>
            <person name="Yazid S."/>
            <person name="Christian H."/>
            <person name="Sirha R."/>
            <person name="Flower R."/>
            <person name="Buckingham J."/>
            <person name="Solito E."/>
        </authorList>
    </citation>
    <scope>FUNCTION</scope>
    <scope>SUBCELLULAR LOCATION</scope>
    <scope>MUTAGENESIS OF SER-27; SER-34 AND SER-45</scope>
</reference>
<reference key="17">
    <citation type="journal article" date="2009" name="Science">
        <title>Lysine acetylation targets protein complexes and co-regulates major cellular functions.</title>
        <authorList>
            <person name="Choudhary C."/>
            <person name="Kumar C."/>
            <person name="Gnad F."/>
            <person name="Nielsen M.L."/>
            <person name="Rehman M."/>
            <person name="Walther T.C."/>
            <person name="Olsen J.V."/>
            <person name="Mann M."/>
        </authorList>
    </citation>
    <scope>ACETYLATION [LARGE SCALE ANALYSIS] AT LYS-239 AND LYS-312</scope>
    <scope>IDENTIFICATION BY MASS SPECTROMETRY [LARGE SCALE ANALYSIS]</scope>
</reference>
<reference key="18">
    <citation type="journal article" date="2010" name="Sci. Signal.">
        <title>Quantitative phosphoproteomics reveals widespread full phosphorylation site occupancy during mitosis.</title>
        <authorList>
            <person name="Olsen J.V."/>
            <person name="Vermeulen M."/>
            <person name="Santamaria A."/>
            <person name="Kumar C."/>
            <person name="Miller M.L."/>
            <person name="Jensen L.J."/>
            <person name="Gnad F."/>
            <person name="Cox J."/>
            <person name="Jensen T.S."/>
            <person name="Nigg E.A."/>
            <person name="Brunak S."/>
            <person name="Mann M."/>
        </authorList>
    </citation>
    <scope>PHOSPHORYLATION [LARGE SCALE ANALYSIS] AT SER-37</scope>
    <scope>IDENTIFICATION BY MASS SPECTROMETRY [LARGE SCALE ANALYSIS]</scope>
    <source>
        <tissue>Cervix carcinoma</tissue>
    </source>
</reference>
<reference key="19">
    <citation type="journal article" date="2011" name="BMC Syst. Biol.">
        <title>Initial characterization of the human central proteome.</title>
        <authorList>
            <person name="Burkard T.R."/>
            <person name="Planyavsky M."/>
            <person name="Kaupe I."/>
            <person name="Breitwieser F.P."/>
            <person name="Buerckstuemmer T."/>
            <person name="Bennett K.L."/>
            <person name="Superti-Furga G."/>
            <person name="Colinge J."/>
        </authorList>
    </citation>
    <scope>IDENTIFICATION BY MASS SPECTROMETRY [LARGE SCALE ANALYSIS]</scope>
</reference>
<reference key="20">
    <citation type="journal article" date="2012" name="J. Biol. Chem.">
        <title>Cathepsin G-regulated release of formyl peptide receptor agonists modulate neutrophil effector functions.</title>
        <authorList>
            <person name="Woloszynek J.C."/>
            <person name="Hu Y."/>
            <person name="Pham C.T."/>
        </authorList>
    </citation>
    <scope>FUNCTION</scope>
    <scope>PROTEOLYTIC CLEAVAGE</scope>
</reference>
<reference key="21">
    <citation type="journal article" date="2013" name="J. Proteome Res.">
        <title>Toward a comprehensive characterization of a human cancer cell phosphoproteome.</title>
        <authorList>
            <person name="Zhou H."/>
            <person name="Di Palma S."/>
            <person name="Preisinger C."/>
            <person name="Peng M."/>
            <person name="Polat A.N."/>
            <person name="Heck A.J."/>
            <person name="Mohammed S."/>
        </authorList>
    </citation>
    <scope>PHOSPHORYLATION [LARGE SCALE ANALYSIS] AT SER-34; SER-37; THR-41 AND THR-136</scope>
    <scope>IDENTIFICATION BY MASS SPECTROMETRY [LARGE SCALE ANALYSIS]</scope>
    <source>
        <tissue>Cervix carcinoma</tissue>
        <tissue>Erythroleukemia</tissue>
    </source>
</reference>
<reference key="22">
    <citation type="journal article" date="2014" name="J. Proteomics">
        <title>An enzyme assisted RP-RPLC approach for in-depth analysis of human liver phosphoproteome.</title>
        <authorList>
            <person name="Bian Y."/>
            <person name="Song C."/>
            <person name="Cheng K."/>
            <person name="Dong M."/>
            <person name="Wang F."/>
            <person name="Huang J."/>
            <person name="Sun D."/>
            <person name="Wang L."/>
            <person name="Ye M."/>
            <person name="Zou H."/>
        </authorList>
    </citation>
    <scope>PHOSPHORYLATION [LARGE SCALE ANALYSIS] AT SER-34</scope>
    <scope>IDENTIFICATION BY MASS SPECTROMETRY [LARGE SCALE ANALYSIS]</scope>
    <source>
        <tissue>Liver</tissue>
    </source>
</reference>
<reference key="23">
    <citation type="journal article" date="2014" name="Proc. Natl. Acad. Sci. U.S.A.">
        <title>Mapping of SUMO sites and analysis of SUMOylation changes induced by external stimuli.</title>
        <authorList>
            <person name="Impens F."/>
            <person name="Radoshevich L."/>
            <person name="Cossart P."/>
            <person name="Ribet D."/>
        </authorList>
    </citation>
    <scope>SUMOYLATION [LARGE SCALE ANALYSIS] AT LYS-214 AND LYS-332</scope>
    <scope>IDENTIFICATION BY MASS SPECTROMETRY [LARGE SCALE ANALYSIS]</scope>
</reference>
<reference key="24">
    <citation type="journal article" date="2015" name="Cell Rep.">
        <title>SUMO-2 orchestrates chromatin modifiers in response to DNA damage.</title>
        <authorList>
            <person name="Hendriks I.A."/>
            <person name="Treffers L.W."/>
            <person name="Verlaan-de Vries M."/>
            <person name="Olsen J.V."/>
            <person name="Vertegaal A.C."/>
        </authorList>
    </citation>
    <scope>SUMOYLATION [LARGE SCALE ANALYSIS] AT LYS-214</scope>
    <scope>IDENTIFICATION BY MASS SPECTROMETRY [LARGE SCALE ANALYSIS]</scope>
</reference>
<reference key="25">
    <citation type="journal article" date="2015" name="J. Clin. Invest.">
        <title>Annexin A1-containing extracellular vesicles and polymeric nanoparticles promote epithelial wound repair.</title>
        <authorList>
            <person name="Leoni G."/>
            <person name="Neumann P.A."/>
            <person name="Kamaly N."/>
            <person name="Quiros M."/>
            <person name="Nishio H."/>
            <person name="Jones H.R."/>
            <person name="Sumagin R."/>
            <person name="Hilgarth R.S."/>
            <person name="Alam A."/>
            <person name="Fredman G."/>
            <person name="Argyris I."/>
            <person name="Rijcken E."/>
            <person name="Kusters D."/>
            <person name="Reutelingsperger C."/>
            <person name="Perretti M."/>
            <person name="Parkos C.A."/>
            <person name="Farokhzad O.C."/>
            <person name="Neish A.S."/>
            <person name="Nusrat A."/>
        </authorList>
    </citation>
    <scope>FUNCTION</scope>
    <scope>SUBCELLULAR LOCATION</scope>
    <scope>TISSUE SPECIFICITY</scope>
</reference>
<reference key="26">
    <citation type="journal article" date="2017" name="Nat. Struct. Mol. Biol.">
        <title>Site-specific mapping of the human SUMO proteome reveals co-modification with phosphorylation.</title>
        <authorList>
            <person name="Hendriks I.A."/>
            <person name="Lyon D."/>
            <person name="Young C."/>
            <person name="Jensen L.J."/>
            <person name="Vertegaal A.C."/>
            <person name="Nielsen M.L."/>
        </authorList>
    </citation>
    <scope>SUMOYLATION [LARGE SCALE ANALYSIS] AT LYS-214</scope>
    <scope>IDENTIFICATION BY MASS SPECTROMETRY [LARGE SCALE ANALYSIS]</scope>
</reference>
<reference key="27">
    <citation type="journal article" date="1993" name="Protein Sci.">
        <title>Crystal structure of human annexin I at 2.5-A resolution.</title>
        <authorList>
            <person name="Weng X."/>
            <person name="Luecke H."/>
            <person name="Song I.S."/>
            <person name="Kang D.S."/>
            <person name="Kim S.-H."/>
            <person name="Huber R."/>
        </authorList>
    </citation>
    <scope>X-RAY CRYSTALLOGRAPHY (2.5 ANGSTROMS) IN COMPLEX WITH CALCIUM IONS</scope>
    <scope>CALCIUM-BINDING</scope>
</reference>
<reference key="28">
    <citation type="journal article" date="1999" name="J. Biol. Chem.">
        <title>NMR solution structure of domain 1 of human annexin I shows an autonomous folding unit.</title>
        <authorList>
            <person name="Gao J."/>
            <person name="Li Y."/>
            <person name="Yan H."/>
        </authorList>
    </citation>
    <scope>STRUCTURE BY NMR OF 41-113</scope>
</reference>
<reference key="29">
    <citation type="journal article" date="2020" name="Cell">
        <title>A Translocation Pathway for Vesicle-Mediated Unconventional Protein Secretion.</title>
        <authorList>
            <person name="Zhang M."/>
            <person name="Liu L."/>
            <person name="Lin X."/>
            <person name="Wang Y."/>
            <person name="Li Y."/>
            <person name="Guo Q."/>
            <person name="Li S."/>
            <person name="Sun Y."/>
            <person name="Tao X."/>
            <person name="Zhang D."/>
            <person name="Lv X."/>
            <person name="Zheng L."/>
            <person name="Ge L."/>
        </authorList>
    </citation>
    <scope>SUBCELLULAR LOCATION</scope>
</reference>
<reference key="30">
    <citation type="journal article" date="2000" name="Structure">
        <title>Structural basis of the Ca(2+)-dependent association between S100C (S100A11) and its target, the N-terminal part of annexin I.</title>
        <authorList>
            <person name="Rety S."/>
            <person name="Osterloh D."/>
            <person name="Arie J.-P."/>
            <person name="Tabaries S."/>
            <person name="Seeman J."/>
            <person name="Russo-Marie F."/>
            <person name="Gerke V."/>
            <person name="Lewit-Bentley A."/>
        </authorList>
    </citation>
    <scope>X-RAY CRYSTALLOGRAPHY (2.30 ANGSTROMS) OF 2-12 IN COMPLEX WITH S100A11</scope>
    <scope>INTERACTION WITH S100A11</scope>
</reference>
<gene>
    <name type="primary">ANXA1</name>
    <name type="synonym">ANX1</name>
    <name type="synonym">LPC1</name>
</gene>
<dbReference type="EMBL" id="X05908">
    <property type="protein sequence ID" value="CAA29338.1"/>
    <property type="molecule type" value="mRNA"/>
</dbReference>
<dbReference type="EMBL" id="AB451274">
    <property type="protein sequence ID" value="BAG70088.1"/>
    <property type="molecule type" value="mRNA"/>
</dbReference>
<dbReference type="EMBL" id="AB451401">
    <property type="protein sequence ID" value="BAG70215.1"/>
    <property type="molecule type" value="mRNA"/>
</dbReference>
<dbReference type="EMBL" id="BC001275">
    <property type="protein sequence ID" value="AAH01275.1"/>
    <property type="molecule type" value="mRNA"/>
</dbReference>
<dbReference type="EMBL" id="BC035993">
    <property type="protein sequence ID" value="AAH35993.1"/>
    <property type="molecule type" value="mRNA"/>
</dbReference>
<dbReference type="CCDS" id="CCDS6645.1"/>
<dbReference type="PIR" id="A03080">
    <property type="entry name" value="LUHU"/>
</dbReference>
<dbReference type="RefSeq" id="NP_000691.1">
    <property type="nucleotide sequence ID" value="NM_000700.3"/>
</dbReference>
<dbReference type="RefSeq" id="XP_011516911.1">
    <property type="nucleotide sequence ID" value="XM_011518609.1"/>
</dbReference>
<dbReference type="RefSeq" id="XP_054218829.1">
    <property type="nucleotide sequence ID" value="XM_054362854.1"/>
</dbReference>
<dbReference type="PDB" id="1AIN">
    <property type="method" value="X-ray"/>
    <property type="resolution" value="2.50 A"/>
    <property type="chains" value="A=33-346"/>
</dbReference>
<dbReference type="PDB" id="1BO9">
    <property type="method" value="NMR"/>
    <property type="chains" value="A=41-113"/>
</dbReference>
<dbReference type="PDB" id="1QLS">
    <property type="method" value="X-ray"/>
    <property type="resolution" value="2.30 A"/>
    <property type="chains" value="D=2-12"/>
</dbReference>
<dbReference type="PDB" id="5VFW">
    <property type="method" value="NMR"/>
    <property type="chains" value="A=2-26"/>
</dbReference>
<dbReference type="PDBsum" id="1AIN"/>
<dbReference type="PDBsum" id="1BO9"/>
<dbReference type="PDBsum" id="1QLS"/>
<dbReference type="PDBsum" id="5VFW"/>
<dbReference type="SMR" id="P04083"/>
<dbReference type="BioGRID" id="106798">
    <property type="interactions" value="313"/>
</dbReference>
<dbReference type="CORUM" id="P04083"/>
<dbReference type="DIP" id="DIP-32875N"/>
<dbReference type="FunCoup" id="P04083">
    <property type="interactions" value="1057"/>
</dbReference>
<dbReference type="IntAct" id="P04083">
    <property type="interactions" value="144"/>
</dbReference>
<dbReference type="MINT" id="P04083"/>
<dbReference type="STRING" id="9606.ENSP00000366109"/>
<dbReference type="DrugBank" id="DB00288">
    <property type="generic name" value="Amcinonide"/>
</dbReference>
<dbReference type="DrugBank" id="DB14669">
    <property type="generic name" value="Betamethasone phosphate"/>
</dbReference>
<dbReference type="DrugBank" id="DB01222">
    <property type="generic name" value="Budesonide"/>
</dbReference>
<dbReference type="DrugBank" id="DB01013">
    <property type="generic name" value="Clobetasol propionate"/>
</dbReference>
<dbReference type="DrugBank" id="DB01380">
    <property type="generic name" value="Cortisone acetate"/>
</dbReference>
<dbReference type="DrugBank" id="DB01234">
    <property type="generic name" value="Dexamethasone"/>
</dbReference>
<dbReference type="DrugBank" id="DB14649">
    <property type="generic name" value="Dexamethasone acetate"/>
</dbReference>
<dbReference type="DrugBank" id="DB06781">
    <property type="generic name" value="Difluprednate"/>
</dbReference>
<dbReference type="DrugBank" id="DB00591">
    <property type="generic name" value="Fluocinolone acetonide"/>
</dbReference>
<dbReference type="DrugBank" id="DB00741">
    <property type="generic name" value="Hydrocortisone"/>
</dbReference>
<dbReference type="DrugBank" id="DB14538">
    <property type="generic name" value="Hydrocortisone aceponate"/>
</dbReference>
<dbReference type="DrugBank" id="DB14539">
    <property type="generic name" value="Hydrocortisone acetate"/>
</dbReference>
<dbReference type="DrugBank" id="DB14540">
    <property type="generic name" value="Hydrocortisone butyrate"/>
</dbReference>
<dbReference type="DrugBank" id="DB14541">
    <property type="generic name" value="Hydrocortisone cypionate"/>
</dbReference>
<dbReference type="DrugBank" id="DB14542">
    <property type="generic name" value="Hydrocortisone phosphate"/>
</dbReference>
<dbReference type="DrugBank" id="DB14543">
    <property type="generic name" value="Hydrocortisone probutate"/>
</dbReference>
<dbReference type="DrugBank" id="DB14544">
    <property type="generic name" value="Hydrocortisone valerate"/>
</dbReference>
<dbReference type="DrugBank" id="DB00959">
    <property type="generic name" value="Methylprednisolone"/>
</dbReference>
<dbReference type="DrugBank" id="DB14631">
    <property type="generic name" value="Prednisolone phosphate"/>
</dbReference>
<dbReference type="DrugCentral" id="P04083"/>
<dbReference type="TCDB" id="1.A.31.1.3">
    <property type="family name" value="the annexin (annexin) family"/>
</dbReference>
<dbReference type="GlyGen" id="P04083">
    <property type="glycosylation" value="2 sites, 2 O-linked glycans (2 sites)"/>
</dbReference>
<dbReference type="iPTMnet" id="P04083"/>
<dbReference type="MetOSite" id="P04083"/>
<dbReference type="PhosphoSitePlus" id="P04083"/>
<dbReference type="SwissPalm" id="P04083"/>
<dbReference type="BioMuta" id="ANXA1"/>
<dbReference type="DMDM" id="113944"/>
<dbReference type="REPRODUCTION-2DPAGE" id="IPI00218918"/>
<dbReference type="REPRODUCTION-2DPAGE" id="P04083"/>
<dbReference type="CPTAC" id="CPTAC-1377"/>
<dbReference type="CPTAC" id="CPTAC-1378"/>
<dbReference type="CPTAC" id="CPTAC-1379"/>
<dbReference type="CPTAC" id="CPTAC-1380"/>
<dbReference type="CPTAC" id="CPTAC-311"/>
<dbReference type="CPTAC" id="CPTAC-312"/>
<dbReference type="CPTAC" id="CPTAC-5939"/>
<dbReference type="CPTAC" id="CPTAC-5940"/>
<dbReference type="CPTAC" id="CPTAC-696"/>
<dbReference type="CPTAC" id="CPTAC-697"/>
<dbReference type="jPOST" id="P04083"/>
<dbReference type="MassIVE" id="P04083"/>
<dbReference type="PaxDb" id="9606-ENSP00000366109"/>
<dbReference type="PeptideAtlas" id="P04083"/>
<dbReference type="PRIDE" id="P04083"/>
<dbReference type="ProteomicsDB" id="51649"/>
<dbReference type="ABCD" id="P04083">
    <property type="antibodies" value="2 sequenced antibodies"/>
</dbReference>
<dbReference type="Antibodypedia" id="2190">
    <property type="antibodies" value="1299 antibodies from 52 providers"/>
</dbReference>
<dbReference type="CPTC" id="P04083">
    <property type="antibodies" value="5 antibodies"/>
</dbReference>
<dbReference type="DNASU" id="301"/>
<dbReference type="Ensembl" id="ENST00000257497.11">
    <property type="protein sequence ID" value="ENSP00000257497.6"/>
    <property type="gene ID" value="ENSG00000135046.15"/>
</dbReference>
<dbReference type="Ensembl" id="ENST00000376911.2">
    <property type="protein sequence ID" value="ENSP00000366109.1"/>
    <property type="gene ID" value="ENSG00000135046.15"/>
</dbReference>
<dbReference type="GeneID" id="301"/>
<dbReference type="KEGG" id="hsa:301"/>
<dbReference type="MANE-Select" id="ENST00000257497.11">
    <property type="protein sequence ID" value="ENSP00000257497.6"/>
    <property type="RefSeq nucleotide sequence ID" value="NM_000700.3"/>
    <property type="RefSeq protein sequence ID" value="NP_000691.1"/>
</dbReference>
<dbReference type="AGR" id="HGNC:533"/>
<dbReference type="CTD" id="301"/>
<dbReference type="DisGeNET" id="301"/>
<dbReference type="GeneCards" id="ANXA1"/>
<dbReference type="HGNC" id="HGNC:533">
    <property type="gene designation" value="ANXA1"/>
</dbReference>
<dbReference type="HPA" id="ENSG00000135046">
    <property type="expression patterns" value="Tissue enhanced (esophagus)"/>
</dbReference>
<dbReference type="MalaCards" id="ANXA1"/>
<dbReference type="MIM" id="151690">
    <property type="type" value="gene"/>
</dbReference>
<dbReference type="neXtProt" id="NX_P04083"/>
<dbReference type="OpenTargets" id="ENSG00000135046"/>
<dbReference type="PharmGKB" id="PA24823"/>
<dbReference type="VEuPathDB" id="HostDB:ENSG00000135046"/>
<dbReference type="eggNOG" id="KOG0819">
    <property type="taxonomic scope" value="Eukaryota"/>
</dbReference>
<dbReference type="GeneTree" id="ENSGT00940000155221"/>
<dbReference type="HOGENOM" id="CLU_025300_0_0_1"/>
<dbReference type="InParanoid" id="P04083"/>
<dbReference type="OMA" id="FMENQEQ"/>
<dbReference type="OrthoDB" id="37886at2759"/>
<dbReference type="PAN-GO" id="P04083">
    <property type="GO annotations" value="46 GO annotations based on evolutionary models"/>
</dbReference>
<dbReference type="PhylomeDB" id="P04083"/>
<dbReference type="TreeFam" id="TF105452"/>
<dbReference type="PathwayCommons" id="P04083"/>
<dbReference type="Reactome" id="R-HSA-416476">
    <property type="pathway name" value="G alpha (q) signalling events"/>
</dbReference>
<dbReference type="Reactome" id="R-HSA-418594">
    <property type="pathway name" value="G alpha (i) signalling events"/>
</dbReference>
<dbReference type="Reactome" id="R-HSA-444473">
    <property type="pathway name" value="Formyl peptide receptors bind formyl peptides and many other ligands"/>
</dbReference>
<dbReference type="Reactome" id="R-HSA-445355">
    <property type="pathway name" value="Smooth Muscle Contraction"/>
</dbReference>
<dbReference type="Reactome" id="R-HSA-6785807">
    <property type="pathway name" value="Interleukin-4 and Interleukin-13 signaling"/>
</dbReference>
<dbReference type="SignaLink" id="P04083"/>
<dbReference type="SIGNOR" id="P04083"/>
<dbReference type="BioGRID-ORCS" id="301">
    <property type="hits" value="13 hits in 1173 CRISPR screens"/>
</dbReference>
<dbReference type="CD-CODE" id="DEE660B4">
    <property type="entry name" value="Stress granule"/>
</dbReference>
<dbReference type="CD-CODE" id="FB4E32DD">
    <property type="entry name" value="Presynaptic clusters and postsynaptic densities"/>
</dbReference>
<dbReference type="ChiTaRS" id="ANXA1">
    <property type="organism name" value="human"/>
</dbReference>
<dbReference type="EvolutionaryTrace" id="P04083"/>
<dbReference type="GeneWiki" id="Annexin_A1"/>
<dbReference type="GenomeRNAi" id="301"/>
<dbReference type="Pharos" id="P04083">
    <property type="development level" value="Tbio"/>
</dbReference>
<dbReference type="PRO" id="PR:P04083"/>
<dbReference type="Proteomes" id="UP000005640">
    <property type="component" value="Chromosome 9"/>
</dbReference>
<dbReference type="RNAct" id="P04083">
    <property type="molecule type" value="protein"/>
</dbReference>
<dbReference type="Bgee" id="ENSG00000135046">
    <property type="expression patterns" value="Expressed in oral cavity and 202 other cell types or tissues"/>
</dbReference>
<dbReference type="ExpressionAtlas" id="P04083">
    <property type="expression patterns" value="baseline and differential"/>
</dbReference>
<dbReference type="GO" id="GO:0005912">
    <property type="term" value="C:adherens junction"/>
    <property type="evidence" value="ECO:0007005"/>
    <property type="project" value="BHF-UCL"/>
</dbReference>
<dbReference type="GO" id="GO:0016324">
    <property type="term" value="C:apical plasma membrane"/>
    <property type="evidence" value="ECO:0000250"/>
    <property type="project" value="UniProtKB"/>
</dbReference>
<dbReference type="GO" id="GO:0016323">
    <property type="term" value="C:basolateral plasma membrane"/>
    <property type="evidence" value="ECO:0007669"/>
    <property type="project" value="UniProtKB-SubCell"/>
</dbReference>
<dbReference type="GO" id="GO:0009986">
    <property type="term" value="C:cell surface"/>
    <property type="evidence" value="ECO:0000314"/>
    <property type="project" value="BHF-UCL"/>
</dbReference>
<dbReference type="GO" id="GO:0062023">
    <property type="term" value="C:collagen-containing extracellular matrix"/>
    <property type="evidence" value="ECO:0007005"/>
    <property type="project" value="BHF-UCL"/>
</dbReference>
<dbReference type="GO" id="GO:0001533">
    <property type="term" value="C:cornified envelope"/>
    <property type="evidence" value="ECO:0000314"/>
    <property type="project" value="UniProtKB"/>
</dbReference>
<dbReference type="GO" id="GO:0005737">
    <property type="term" value="C:cytoplasm"/>
    <property type="evidence" value="ECO:0000314"/>
    <property type="project" value="UniProtKB"/>
</dbReference>
<dbReference type="GO" id="GO:0005829">
    <property type="term" value="C:cytosol"/>
    <property type="evidence" value="ECO:0000314"/>
    <property type="project" value="HPA"/>
</dbReference>
<dbReference type="GO" id="GO:0031901">
    <property type="term" value="C:early endosome membrane"/>
    <property type="evidence" value="ECO:0000250"/>
    <property type="project" value="UniProtKB"/>
</dbReference>
<dbReference type="GO" id="GO:0005768">
    <property type="term" value="C:endosome"/>
    <property type="evidence" value="ECO:0000314"/>
    <property type="project" value="UniProtKB"/>
</dbReference>
<dbReference type="GO" id="GO:0070062">
    <property type="term" value="C:extracellular exosome"/>
    <property type="evidence" value="ECO:0000314"/>
    <property type="project" value="UniProtKB"/>
</dbReference>
<dbReference type="GO" id="GO:0005576">
    <property type="term" value="C:extracellular region"/>
    <property type="evidence" value="ECO:0000304"/>
    <property type="project" value="Reactome"/>
</dbReference>
<dbReference type="GO" id="GO:0005615">
    <property type="term" value="C:extracellular space"/>
    <property type="evidence" value="ECO:0000314"/>
    <property type="project" value="UniProtKB"/>
</dbReference>
<dbReference type="GO" id="GO:0005925">
    <property type="term" value="C:focal adhesion"/>
    <property type="evidence" value="ECO:0007005"/>
    <property type="project" value="UniProtKB"/>
</dbReference>
<dbReference type="GO" id="GO:0016328">
    <property type="term" value="C:lateral plasma membrane"/>
    <property type="evidence" value="ECO:0000250"/>
    <property type="project" value="UniProtKB"/>
</dbReference>
<dbReference type="GO" id="GO:0031514">
    <property type="term" value="C:motile cilium"/>
    <property type="evidence" value="ECO:0000250"/>
    <property type="project" value="UniProtKB"/>
</dbReference>
<dbReference type="GO" id="GO:0005654">
    <property type="term" value="C:nucleoplasm"/>
    <property type="evidence" value="ECO:0000314"/>
    <property type="project" value="HPA"/>
</dbReference>
<dbReference type="GO" id="GO:0005634">
    <property type="term" value="C:nucleus"/>
    <property type="evidence" value="ECO:0000314"/>
    <property type="project" value="UniProtKB"/>
</dbReference>
<dbReference type="GO" id="GO:0001891">
    <property type="term" value="C:phagocytic cup"/>
    <property type="evidence" value="ECO:0007669"/>
    <property type="project" value="UniProtKB-SubCell"/>
</dbReference>
<dbReference type="GO" id="GO:0005886">
    <property type="term" value="C:plasma membrane"/>
    <property type="evidence" value="ECO:0000314"/>
    <property type="project" value="UniProtKB"/>
</dbReference>
<dbReference type="GO" id="GO:0042383">
    <property type="term" value="C:sarcolemma"/>
    <property type="evidence" value="ECO:0007669"/>
    <property type="project" value="Ensembl"/>
</dbReference>
<dbReference type="GO" id="GO:0031982">
    <property type="term" value="C:vesicle"/>
    <property type="evidence" value="ECO:0007005"/>
    <property type="project" value="UniProtKB"/>
</dbReference>
<dbReference type="GO" id="GO:0012506">
    <property type="term" value="C:vesicle membrane"/>
    <property type="evidence" value="ECO:0000318"/>
    <property type="project" value="GO_Central"/>
</dbReference>
<dbReference type="GO" id="GO:0098641">
    <property type="term" value="F:cadherin binding involved in cell-cell adhesion"/>
    <property type="evidence" value="ECO:0007005"/>
    <property type="project" value="BHF-UCL"/>
</dbReference>
<dbReference type="GO" id="GO:0005509">
    <property type="term" value="F:calcium ion binding"/>
    <property type="evidence" value="ECO:0000269"/>
    <property type="project" value="DisProt"/>
</dbReference>
<dbReference type="GO" id="GO:0005544">
    <property type="term" value="F:calcium-dependent phospholipid binding"/>
    <property type="evidence" value="ECO:0000314"/>
    <property type="project" value="UniProtKB"/>
</dbReference>
<dbReference type="GO" id="GO:0048306">
    <property type="term" value="F:calcium-dependent protein binding"/>
    <property type="evidence" value="ECO:0000353"/>
    <property type="project" value="GO_Central"/>
</dbReference>
<dbReference type="GO" id="GO:0008289">
    <property type="term" value="F:lipid binding"/>
    <property type="evidence" value="ECO:0000269"/>
    <property type="project" value="DisProt"/>
</dbReference>
<dbReference type="GO" id="GO:0001786">
    <property type="term" value="F:phosphatidylserine binding"/>
    <property type="evidence" value="ECO:0000318"/>
    <property type="project" value="GO_Central"/>
</dbReference>
<dbReference type="GO" id="GO:0019834">
    <property type="term" value="F:phospholipase A2 inhibitor activity"/>
    <property type="evidence" value="ECO:0000314"/>
    <property type="project" value="UniProtKB"/>
</dbReference>
<dbReference type="GO" id="GO:0005543">
    <property type="term" value="F:phospholipid binding"/>
    <property type="evidence" value="ECO:0000304"/>
    <property type="project" value="ProtInc"/>
</dbReference>
<dbReference type="GO" id="GO:0005102">
    <property type="term" value="F:signaling receptor binding"/>
    <property type="evidence" value="ECO:0000304"/>
    <property type="project" value="ProtInc"/>
</dbReference>
<dbReference type="GO" id="GO:0030036">
    <property type="term" value="P:actin cytoskeleton organization"/>
    <property type="evidence" value="ECO:0000314"/>
    <property type="project" value="UniProtKB"/>
</dbReference>
<dbReference type="GO" id="GO:0002250">
    <property type="term" value="P:adaptive immune response"/>
    <property type="evidence" value="ECO:0007669"/>
    <property type="project" value="UniProtKB-KW"/>
</dbReference>
<dbReference type="GO" id="GO:0046632">
    <property type="term" value="P:alpha-beta T cell differentiation"/>
    <property type="evidence" value="ECO:0000250"/>
    <property type="project" value="BHF-UCL"/>
</dbReference>
<dbReference type="GO" id="GO:0050482">
    <property type="term" value="P:arachidonate secretion"/>
    <property type="evidence" value="ECO:0007669"/>
    <property type="project" value="Ensembl"/>
</dbReference>
<dbReference type="GO" id="GO:0007166">
    <property type="term" value="P:cell surface receptor signaling pathway"/>
    <property type="evidence" value="ECO:0000304"/>
    <property type="project" value="ProtInc"/>
</dbReference>
<dbReference type="GO" id="GO:0071385">
    <property type="term" value="P:cellular response to glucocorticoid stimulus"/>
    <property type="evidence" value="ECO:0000314"/>
    <property type="project" value="BHF-UCL"/>
</dbReference>
<dbReference type="GO" id="GO:0035924">
    <property type="term" value="P:cellular response to vascular endothelial growth factor stimulus"/>
    <property type="evidence" value="ECO:0000314"/>
    <property type="project" value="BHF-UCL"/>
</dbReference>
<dbReference type="GO" id="GO:0007187">
    <property type="term" value="P:G protein-coupled receptor signaling pathway, coupled to cyclic nucleotide second messenger"/>
    <property type="evidence" value="ECO:0000314"/>
    <property type="project" value="UniProtKB"/>
</dbReference>
<dbReference type="GO" id="GO:0071621">
    <property type="term" value="P:granulocyte chemotaxis"/>
    <property type="evidence" value="ECO:0000314"/>
    <property type="project" value="UniProtKB"/>
</dbReference>
<dbReference type="GO" id="GO:0006954">
    <property type="term" value="P:inflammatory response"/>
    <property type="evidence" value="ECO:0000250"/>
    <property type="project" value="UniProtKB"/>
</dbReference>
<dbReference type="GO" id="GO:0045087">
    <property type="term" value="P:innate immune response"/>
    <property type="evidence" value="ECO:0007669"/>
    <property type="project" value="UniProtKB-KW"/>
</dbReference>
<dbReference type="GO" id="GO:0030216">
    <property type="term" value="P:keratinocyte differentiation"/>
    <property type="evidence" value="ECO:0000314"/>
    <property type="project" value="UniProtKB"/>
</dbReference>
<dbReference type="GO" id="GO:0002548">
    <property type="term" value="P:monocyte chemotaxis"/>
    <property type="evidence" value="ECO:0000314"/>
    <property type="project" value="UniProtKB"/>
</dbReference>
<dbReference type="GO" id="GO:0014839">
    <property type="term" value="P:myoblast migration involved in skeletal muscle regeneration"/>
    <property type="evidence" value="ECO:0007669"/>
    <property type="project" value="Ensembl"/>
</dbReference>
<dbReference type="GO" id="GO:0043066">
    <property type="term" value="P:negative regulation of apoptotic process"/>
    <property type="evidence" value="ECO:0000304"/>
    <property type="project" value="UniProtKB"/>
</dbReference>
<dbReference type="GO" id="GO:0045920">
    <property type="term" value="P:negative regulation of exocytosis"/>
    <property type="evidence" value="ECO:0000315"/>
    <property type="project" value="UniProtKB"/>
</dbReference>
<dbReference type="GO" id="GO:0032717">
    <property type="term" value="P:negative regulation of interleukin-8 production"/>
    <property type="evidence" value="ECO:0000315"/>
    <property type="project" value="BHF-UCL"/>
</dbReference>
<dbReference type="GO" id="GO:0045629">
    <property type="term" value="P:negative regulation of T-helper 2 cell differentiation"/>
    <property type="evidence" value="ECO:0000314"/>
    <property type="project" value="UniProtKB"/>
</dbReference>
<dbReference type="GO" id="GO:0042119">
    <property type="term" value="P:neutrophil activation"/>
    <property type="evidence" value="ECO:0000314"/>
    <property type="project" value="UniProtKB"/>
</dbReference>
<dbReference type="GO" id="GO:0097350">
    <property type="term" value="P:neutrophil clearance"/>
    <property type="evidence" value="ECO:0000315"/>
    <property type="project" value="BHF-UCL"/>
</dbReference>
<dbReference type="GO" id="GO:0001780">
    <property type="term" value="P:neutrophil homeostasis"/>
    <property type="evidence" value="ECO:0000315"/>
    <property type="project" value="BHF-UCL"/>
</dbReference>
<dbReference type="GO" id="GO:0018149">
    <property type="term" value="P:peptide cross-linking"/>
    <property type="evidence" value="ECO:0000314"/>
    <property type="project" value="UniProtKB"/>
</dbReference>
<dbReference type="GO" id="GO:0006909">
    <property type="term" value="P:phagocytosis"/>
    <property type="evidence" value="ECO:0000250"/>
    <property type="project" value="UniProtKB"/>
</dbReference>
<dbReference type="GO" id="GO:0090050">
    <property type="term" value="P:positive regulation of cell migration involved in sprouting angiogenesis"/>
    <property type="evidence" value="ECO:0000314"/>
    <property type="project" value="BHF-UCL"/>
</dbReference>
<dbReference type="GO" id="GO:1900087">
    <property type="term" value="P:positive regulation of G1/S transition of mitotic cell cycle"/>
    <property type="evidence" value="ECO:0007669"/>
    <property type="project" value="Ensembl"/>
</dbReference>
<dbReference type="GO" id="GO:0032743">
    <property type="term" value="P:positive regulation of interleukin-2 production"/>
    <property type="evidence" value="ECO:0000314"/>
    <property type="project" value="UniProtKB"/>
</dbReference>
<dbReference type="GO" id="GO:0033031">
    <property type="term" value="P:positive regulation of neutrophil apoptotic process"/>
    <property type="evidence" value="ECO:0007669"/>
    <property type="project" value="Ensembl"/>
</dbReference>
<dbReference type="GO" id="GO:0042102">
    <property type="term" value="P:positive regulation of T cell proliferation"/>
    <property type="evidence" value="ECO:0000314"/>
    <property type="project" value="UniProtKB"/>
</dbReference>
<dbReference type="GO" id="GO:0045627">
    <property type="term" value="P:positive regulation of T-helper 1 cell differentiation"/>
    <property type="evidence" value="ECO:0000314"/>
    <property type="project" value="UniProtKB"/>
</dbReference>
<dbReference type="GO" id="GO:0031340">
    <property type="term" value="P:positive regulation of vesicle fusion"/>
    <property type="evidence" value="ECO:0000314"/>
    <property type="project" value="UniProtKB"/>
</dbReference>
<dbReference type="GO" id="GO:0090303">
    <property type="term" value="P:positive regulation of wound healing"/>
    <property type="evidence" value="ECO:0000314"/>
    <property type="project" value="UniProtKB"/>
</dbReference>
<dbReference type="GO" id="GO:0008360">
    <property type="term" value="P:regulation of cell shape"/>
    <property type="evidence" value="ECO:0000314"/>
    <property type="project" value="UniProtKB"/>
</dbReference>
<dbReference type="GO" id="GO:0046883">
    <property type="term" value="P:regulation of hormone secretion"/>
    <property type="evidence" value="ECO:0000315"/>
    <property type="project" value="UniProtKB"/>
</dbReference>
<dbReference type="GO" id="GO:0050727">
    <property type="term" value="P:regulation of inflammatory response"/>
    <property type="evidence" value="ECO:0000250"/>
    <property type="project" value="UniProtKB"/>
</dbReference>
<dbReference type="GO" id="GO:0032652">
    <property type="term" value="P:regulation of interleukin-1 production"/>
    <property type="evidence" value="ECO:0000250"/>
    <property type="project" value="UniProtKB"/>
</dbReference>
<dbReference type="GO" id="GO:0002685">
    <property type="term" value="P:regulation of leukocyte migration"/>
    <property type="evidence" value="ECO:0000250"/>
    <property type="project" value="UniProtKB"/>
</dbReference>
<dbReference type="GO" id="GO:0007165">
    <property type="term" value="P:signal transduction"/>
    <property type="evidence" value="ECO:0000318"/>
    <property type="project" value="GO_Central"/>
</dbReference>
<dbReference type="DisProt" id="DP01951"/>
<dbReference type="FunFam" id="1.10.220.10:FF:000001">
    <property type="entry name" value="Annexin"/>
    <property type="match status" value="1"/>
</dbReference>
<dbReference type="FunFam" id="1.10.220.10:FF:000002">
    <property type="entry name" value="Annexin"/>
    <property type="match status" value="1"/>
</dbReference>
<dbReference type="FunFam" id="1.10.220.10:FF:000003">
    <property type="entry name" value="Annexin"/>
    <property type="match status" value="1"/>
</dbReference>
<dbReference type="FunFam" id="1.10.220.10:FF:000007">
    <property type="entry name" value="Annexin"/>
    <property type="match status" value="1"/>
</dbReference>
<dbReference type="Gene3D" id="1.10.220.10">
    <property type="entry name" value="Annexin"/>
    <property type="match status" value="4"/>
</dbReference>
<dbReference type="IDEAL" id="IID00137"/>
<dbReference type="InterPro" id="IPR001464">
    <property type="entry name" value="Annexin"/>
</dbReference>
<dbReference type="InterPro" id="IPR018502">
    <property type="entry name" value="Annexin_repeat"/>
</dbReference>
<dbReference type="InterPro" id="IPR018252">
    <property type="entry name" value="Annexin_repeat_CS"/>
</dbReference>
<dbReference type="InterPro" id="IPR037104">
    <property type="entry name" value="Annexin_sf"/>
</dbReference>
<dbReference type="InterPro" id="IPR002388">
    <property type="entry name" value="ANX1"/>
</dbReference>
<dbReference type="PANTHER" id="PTHR10502">
    <property type="entry name" value="ANNEXIN"/>
    <property type="match status" value="1"/>
</dbReference>
<dbReference type="PANTHER" id="PTHR10502:SF17">
    <property type="entry name" value="ANNEXIN A1"/>
    <property type="match status" value="1"/>
</dbReference>
<dbReference type="Pfam" id="PF00191">
    <property type="entry name" value="Annexin"/>
    <property type="match status" value="4"/>
</dbReference>
<dbReference type="PRINTS" id="PR00196">
    <property type="entry name" value="ANNEXIN"/>
</dbReference>
<dbReference type="PRINTS" id="PR00197">
    <property type="entry name" value="ANNEXINI"/>
</dbReference>
<dbReference type="SMART" id="SM00335">
    <property type="entry name" value="ANX"/>
    <property type="match status" value="4"/>
</dbReference>
<dbReference type="SUPFAM" id="SSF47874">
    <property type="entry name" value="Annexin"/>
    <property type="match status" value="1"/>
</dbReference>
<dbReference type="PROSITE" id="PS00223">
    <property type="entry name" value="ANNEXIN_1"/>
    <property type="match status" value="4"/>
</dbReference>
<dbReference type="PROSITE" id="PS51897">
    <property type="entry name" value="ANNEXIN_2"/>
    <property type="match status" value="4"/>
</dbReference>
<proteinExistence type="evidence at protein level"/>
<evidence type="ECO:0000250" key="1">
    <source>
        <dbReference type="UniProtKB" id="P07150"/>
    </source>
</evidence>
<evidence type="ECO:0000250" key="2">
    <source>
        <dbReference type="UniProtKB" id="P10107"/>
    </source>
</evidence>
<evidence type="ECO:0000250" key="3">
    <source>
        <dbReference type="UniProtKB" id="P19619"/>
    </source>
</evidence>
<evidence type="ECO:0000250" key="4">
    <source>
        <dbReference type="UniProtKB" id="P46193"/>
    </source>
</evidence>
<evidence type="ECO:0000250" key="5">
    <source>
        <dbReference type="UniProtKB" id="P51662"/>
    </source>
</evidence>
<evidence type="ECO:0000255" key="6">
    <source>
        <dbReference type="PROSITE-ProRule" id="PRU01245"/>
    </source>
</evidence>
<evidence type="ECO:0000269" key="7">
    <source>
    </source>
</evidence>
<evidence type="ECO:0000269" key="8">
    <source>
    </source>
</evidence>
<evidence type="ECO:0000269" key="9">
    <source>
    </source>
</evidence>
<evidence type="ECO:0000269" key="10">
    <source>
    </source>
</evidence>
<evidence type="ECO:0000269" key="11">
    <source>
    </source>
</evidence>
<evidence type="ECO:0000269" key="12">
    <source>
    </source>
</evidence>
<evidence type="ECO:0000269" key="13">
    <source>
    </source>
</evidence>
<evidence type="ECO:0000269" key="14">
    <source>
    </source>
</evidence>
<evidence type="ECO:0000269" key="15">
    <source>
    </source>
</evidence>
<evidence type="ECO:0000269" key="16">
    <source>
    </source>
</evidence>
<evidence type="ECO:0000269" key="17">
    <source>
    </source>
</evidence>
<evidence type="ECO:0000269" key="18">
    <source>
    </source>
</evidence>
<evidence type="ECO:0000269" key="19">
    <source>
    </source>
</evidence>
<evidence type="ECO:0000269" key="20">
    <source>
    </source>
</evidence>
<evidence type="ECO:0000269" key="21">
    <source>
    </source>
</evidence>
<evidence type="ECO:0000303" key="22">
    <source>
    </source>
</evidence>
<evidence type="ECO:0000303" key="23">
    <source>
    </source>
</evidence>
<evidence type="ECO:0000305" key="24"/>
<evidence type="ECO:0007744" key="25">
    <source>
    </source>
</evidence>
<evidence type="ECO:0007744" key="26">
    <source>
    </source>
</evidence>
<evidence type="ECO:0007744" key="27">
    <source>
    </source>
</evidence>
<evidence type="ECO:0007744" key="28">
    <source>
    </source>
</evidence>
<evidence type="ECO:0007744" key="29">
    <source>
    </source>
</evidence>
<evidence type="ECO:0007744" key="30">
    <source>
    </source>
</evidence>
<evidence type="ECO:0007744" key="31">
    <source>
    </source>
</evidence>
<evidence type="ECO:0007829" key="32">
    <source>
        <dbReference type="PDB" id="1BO9"/>
    </source>
</evidence>
<evidence type="ECO:0007829" key="33">
    <source>
        <dbReference type="PDB" id="1QLS"/>
    </source>
</evidence>
<evidence type="ECO:0007829" key="34">
    <source>
        <dbReference type="PDB" id="5VFW"/>
    </source>
</evidence>
<name>ANXA1_HUMAN</name>
<keyword id="KW-0002">3D-structure</keyword>
<keyword id="KW-0007">Acetylation</keyword>
<keyword id="KW-1064">Adaptive immunity</keyword>
<keyword id="KW-0041">Annexin</keyword>
<keyword id="KW-0106">Calcium</keyword>
<keyword id="KW-0111">Calcium/phospholipid-binding</keyword>
<keyword id="KW-1003">Cell membrane</keyword>
<keyword id="KW-0966">Cell projection</keyword>
<keyword id="KW-0969">Cilium</keyword>
<keyword id="KW-0963">Cytoplasm</keyword>
<keyword id="KW-0968">Cytoplasmic vesicle</keyword>
<keyword id="KW-0903">Direct protein sequencing</keyword>
<keyword id="KW-1015">Disulfide bond</keyword>
<keyword id="KW-0967">Endosome</keyword>
<keyword id="KW-0391">Immunity</keyword>
<keyword id="KW-0395">Inflammatory response</keyword>
<keyword id="KW-0399">Innate immunity</keyword>
<keyword id="KW-1017">Isopeptide bond</keyword>
<keyword id="KW-0472">Membrane</keyword>
<keyword id="KW-0479">Metal-binding</keyword>
<keyword id="KW-0539">Nucleus</keyword>
<keyword id="KW-0582">Pharmaceutical</keyword>
<keyword id="KW-0593">Phospholipase A2 inhibitor</keyword>
<keyword id="KW-0597">Phosphoprotein</keyword>
<keyword id="KW-1267">Proteomics identification</keyword>
<keyword id="KW-1185">Reference proteome</keyword>
<keyword id="KW-0677">Repeat</keyword>
<keyword id="KW-0964">Secreted</keyword>
<keyword id="KW-0832">Ubl conjugation</keyword>
<organism>
    <name type="scientific">Homo sapiens</name>
    <name type="common">Human</name>
    <dbReference type="NCBI Taxonomy" id="9606"/>
    <lineage>
        <taxon>Eukaryota</taxon>
        <taxon>Metazoa</taxon>
        <taxon>Chordata</taxon>
        <taxon>Craniata</taxon>
        <taxon>Vertebrata</taxon>
        <taxon>Euteleostomi</taxon>
        <taxon>Mammalia</taxon>
        <taxon>Eutheria</taxon>
        <taxon>Euarchontoglires</taxon>
        <taxon>Primates</taxon>
        <taxon>Haplorrhini</taxon>
        <taxon>Catarrhini</taxon>
        <taxon>Hominidae</taxon>
        <taxon>Homo</taxon>
    </lineage>
</organism>
<feature type="initiator methionine" description="Removed" evidence="19">
    <location>
        <position position="1"/>
    </location>
</feature>
<feature type="chain" id="PRO_0000067460" description="Annexin A1">
    <location>
        <begin position="2"/>
        <end position="346"/>
    </location>
</feature>
<feature type="peptide" id="PRO_0000454556" description="Annexin Ac2-26" evidence="13">
    <location>
        <begin position="2"/>
        <end position="26"/>
    </location>
</feature>
<feature type="repeat" description="Annexin 1" evidence="6">
    <location>
        <begin position="42"/>
        <end position="113"/>
    </location>
</feature>
<feature type="repeat" description="Annexin 2" evidence="6">
    <location>
        <begin position="114"/>
        <end position="185"/>
    </location>
</feature>
<feature type="repeat" description="Annexin 3" evidence="6">
    <location>
        <begin position="197"/>
        <end position="269"/>
    </location>
</feature>
<feature type="repeat" description="Annexin 4" evidence="6">
    <location>
        <begin position="273"/>
        <end position="344"/>
    </location>
</feature>
<feature type="binding site" evidence="3">
    <location>
        <position position="59"/>
    </location>
    <ligand>
        <name>Ca(2+)</name>
        <dbReference type="ChEBI" id="CHEBI:29108"/>
        <label>1</label>
    </ligand>
</feature>
<feature type="binding site" evidence="3">
    <location>
        <position position="60"/>
    </location>
    <ligand>
        <name>Ca(2+)</name>
        <dbReference type="ChEBI" id="CHEBI:29108"/>
        <label>1</label>
    </ligand>
</feature>
<feature type="binding site" evidence="3">
    <location>
        <position position="62"/>
    </location>
    <ligand>
        <name>Ca(2+)</name>
        <dbReference type="ChEBI" id="CHEBI:29108"/>
        <label>1</label>
    </ligand>
</feature>
<feature type="binding site" evidence="3">
    <location>
        <position position="97"/>
    </location>
    <ligand>
        <name>Ca(2+)</name>
        <dbReference type="ChEBI" id="CHEBI:29108"/>
        <label>2</label>
    </ligand>
</feature>
<feature type="binding site" evidence="3">
    <location>
        <position position="100"/>
    </location>
    <ligand>
        <name>Ca(2+)</name>
        <dbReference type="ChEBI" id="CHEBI:29108"/>
        <label>2</label>
    </ligand>
</feature>
<feature type="binding site" evidence="3">
    <location>
        <position position="105"/>
    </location>
    <ligand>
        <name>Ca(2+)</name>
        <dbReference type="ChEBI" id="CHEBI:29108"/>
        <label>2</label>
    </ligand>
</feature>
<feature type="binding site" evidence="3">
    <location>
        <position position="127"/>
    </location>
    <ligand>
        <name>Ca(2+)</name>
        <dbReference type="ChEBI" id="CHEBI:29108"/>
        <label>3</label>
    </ligand>
</feature>
<feature type="binding site" evidence="3">
    <location>
        <position position="129"/>
    </location>
    <ligand>
        <name>Ca(2+)</name>
        <dbReference type="ChEBI" id="CHEBI:29108"/>
        <label>3</label>
    </ligand>
</feature>
<feature type="binding site" evidence="3">
    <location>
        <position position="131"/>
    </location>
    <ligand>
        <name>Ca(2+)</name>
        <dbReference type="ChEBI" id="CHEBI:29108"/>
        <label>3</label>
    </ligand>
</feature>
<feature type="binding site" evidence="3">
    <location>
        <position position="132"/>
    </location>
    <ligand>
        <name>Ca(2+)</name>
        <dbReference type="ChEBI" id="CHEBI:29108"/>
        <label>4</label>
    </ligand>
</feature>
<feature type="binding site" evidence="3">
    <location>
        <position position="134"/>
    </location>
    <ligand>
        <name>Ca(2+)</name>
        <dbReference type="ChEBI" id="CHEBI:29108"/>
        <label>4</label>
    </ligand>
</feature>
<feature type="binding site" evidence="3">
    <location>
        <position position="171"/>
    </location>
    <ligand>
        <name>Ca(2+)</name>
        <dbReference type="ChEBI" id="CHEBI:29108"/>
        <label>3</label>
    </ligand>
</feature>
<feature type="binding site" evidence="3">
    <location>
        <position position="210"/>
    </location>
    <ligand>
        <name>Ca(2+)</name>
        <dbReference type="ChEBI" id="CHEBI:29108"/>
        <label>5</label>
    </ligand>
</feature>
<feature type="binding site" evidence="3">
    <location>
        <position position="213"/>
    </location>
    <ligand>
        <name>Ca(2+)</name>
        <dbReference type="ChEBI" id="CHEBI:29108"/>
        <label>5</label>
    </ligand>
</feature>
<feature type="binding site" evidence="3">
    <location>
        <position position="215"/>
    </location>
    <ligand>
        <name>Ca(2+)</name>
        <dbReference type="ChEBI" id="CHEBI:29108"/>
        <label>5</label>
    </ligand>
</feature>
<feature type="binding site" evidence="3">
    <location>
        <position position="253"/>
    </location>
    <ligand>
        <name>Ca(2+)</name>
        <dbReference type="ChEBI" id="CHEBI:29108"/>
        <label>6</label>
    </ligand>
</feature>
<feature type="binding site" evidence="3">
    <location>
        <position position="255"/>
    </location>
    <ligand>
        <name>Ca(2+)</name>
        <dbReference type="ChEBI" id="CHEBI:29108"/>
        <label>5</label>
    </ligand>
</feature>
<feature type="binding site" evidence="3">
    <location>
        <position position="256"/>
    </location>
    <ligand>
        <name>Ca(2+)</name>
        <dbReference type="ChEBI" id="CHEBI:29108"/>
        <label>6</label>
    </ligand>
</feature>
<feature type="binding site" evidence="3">
    <location>
        <position position="261"/>
    </location>
    <ligand>
        <name>Ca(2+)</name>
        <dbReference type="ChEBI" id="CHEBI:29108"/>
        <label>6</label>
    </ligand>
</feature>
<feature type="binding site" evidence="3">
    <location>
        <position position="286"/>
    </location>
    <ligand>
        <name>Ca(2+)</name>
        <dbReference type="ChEBI" id="CHEBI:29108"/>
        <label>7</label>
    </ligand>
</feature>
<feature type="binding site" evidence="3">
    <location>
        <position position="288"/>
    </location>
    <ligand>
        <name>Ca(2+)</name>
        <dbReference type="ChEBI" id="CHEBI:29108"/>
        <label>7</label>
    </ligand>
</feature>
<feature type="binding site" evidence="3">
    <location>
        <position position="290"/>
    </location>
    <ligand>
        <name>Ca(2+)</name>
        <dbReference type="ChEBI" id="CHEBI:29108"/>
        <label>7</label>
    </ligand>
</feature>
<feature type="binding site" evidence="3">
    <location>
        <position position="328"/>
    </location>
    <ligand>
        <name>Ca(2+)</name>
        <dbReference type="ChEBI" id="CHEBI:29108"/>
        <label>8</label>
    </ligand>
</feature>
<feature type="binding site" evidence="3">
    <location>
        <position position="330"/>
    </location>
    <ligand>
        <name>Ca(2+)</name>
        <dbReference type="ChEBI" id="CHEBI:29108"/>
        <label>7</label>
    </ligand>
</feature>
<feature type="binding site" evidence="3">
    <location>
        <position position="331"/>
    </location>
    <ligand>
        <name>Ca(2+)</name>
        <dbReference type="ChEBI" id="CHEBI:29108"/>
        <label>8</label>
    </ligand>
</feature>
<feature type="binding site" evidence="3">
    <location>
        <position position="336"/>
    </location>
    <ligand>
        <name>Ca(2+)</name>
        <dbReference type="ChEBI" id="CHEBI:29108"/>
        <label>8</label>
    </ligand>
</feature>
<feature type="site" description="Cleavage; by CTSG" evidence="13">
    <location>
        <begin position="26"/>
        <end position="27"/>
    </location>
</feature>
<feature type="modified residue" description="N-acetylalanine" evidence="19">
    <location>
        <position position="2"/>
    </location>
</feature>
<feature type="modified residue" description="Phosphoserine; by TRPM7" evidence="10">
    <location>
        <position position="5"/>
    </location>
</feature>
<feature type="modified residue" description="Phosphotyrosine; by EGFR" evidence="14">
    <location>
        <position position="21"/>
    </location>
</feature>
<feature type="modified residue" description="Phosphoserine; by PKC" evidence="14">
    <location>
        <position position="27"/>
    </location>
</feature>
<feature type="modified residue" description="Phosphoserine" evidence="27 28">
    <location>
        <position position="34"/>
    </location>
</feature>
<feature type="modified residue" description="Phosphoserine" evidence="26 27">
    <location>
        <position position="37"/>
    </location>
</feature>
<feature type="modified residue" description="Phosphothreonine" evidence="27">
    <location>
        <position position="41"/>
    </location>
</feature>
<feature type="modified residue" description="N6-acetyllysine" evidence="2">
    <location>
        <position position="58"/>
    </location>
</feature>
<feature type="modified residue" description="Phosphothreonine" evidence="27">
    <location>
        <position position="136"/>
    </location>
</feature>
<feature type="modified residue" description="N6-acetyllysine" evidence="25">
    <location>
        <position position="239"/>
    </location>
</feature>
<feature type="modified residue" description="N6-acetyllysine" evidence="25">
    <location>
        <position position="312"/>
    </location>
</feature>
<feature type="disulfide bond" evidence="3">
    <location>
        <begin position="324"/>
        <end position="343"/>
    </location>
</feature>
<feature type="cross-link" description="Isoglutamyl lysine isopeptide (Gln-Lys) (interchain with K-?)">
    <location>
        <position position="19"/>
    </location>
</feature>
<feature type="cross-link" description="Glycyl lysine isopeptide (Lys-Gly) (interchain with G-Cter in SUMO1); alternate" evidence="29">
    <location>
        <position position="214"/>
    </location>
</feature>
<feature type="cross-link" description="Glycyl lysine isopeptide (Lys-Gly) (interchain with G-Cter in SUMO2); alternate" evidence="30 31">
    <location>
        <position position="214"/>
    </location>
</feature>
<feature type="cross-link" description="Glycyl lysine isopeptide (Lys-Gly) (interchain with G-Cter in SUMO1)" evidence="2">
    <location>
        <position position="257"/>
    </location>
</feature>
<feature type="cross-link" description="Glycyl lysine isopeptide (Lys-Gly) (interchain with G-Cter in SUMO1)" evidence="29">
    <location>
        <position position="332"/>
    </location>
</feature>
<feature type="mutagenesis site" description="Abolishes secretion and modulation of exocytosis." evidence="12">
    <original>S</original>
    <variation>A</variation>
    <location>
        <position position="27"/>
    </location>
</feature>
<feature type="mutagenesis site" description="No effect on secretion and modulation of exocytosis." evidence="12">
    <original>S</original>
    <variation>A</variation>
    <location>
        <position position="34"/>
    </location>
</feature>
<feature type="mutagenesis site" description="Abolishes secretion and nearly abolishes modulation of exocytosis." evidence="12">
    <original>S</original>
    <variation>A</variation>
    <location>
        <position position="45"/>
    </location>
</feature>
<feature type="sequence conflict" description="In Ref. 4; BAG70088/BAG70215." evidence="24" ref="4">
    <original>F</original>
    <variation>L</variation>
    <location>
        <position position="118"/>
    </location>
</feature>
<feature type="helix" evidence="33">
    <location>
        <begin position="3"/>
        <end position="10"/>
    </location>
</feature>
<feature type="helix" evidence="34">
    <location>
        <begin position="16"/>
        <end position="18"/>
    </location>
</feature>
<feature type="helix" evidence="32">
    <location>
        <begin position="46"/>
        <end position="55"/>
    </location>
</feature>
<feature type="strand" evidence="32">
    <location>
        <begin position="62"/>
        <end position="64"/>
    </location>
</feature>
<feature type="helix" evidence="32">
    <location>
        <begin position="65"/>
        <end position="71"/>
    </location>
</feature>
<feature type="helix" evidence="32">
    <location>
        <begin position="77"/>
        <end position="87"/>
    </location>
</feature>
<feature type="helix" evidence="32">
    <location>
        <begin position="94"/>
        <end position="99"/>
    </location>
</feature>
<feature type="helix" evidence="32">
    <location>
        <begin position="106"/>
        <end position="109"/>
    </location>
</feature>
<feature type="helix" evidence="32">
    <location>
        <begin position="110"/>
        <end position="112"/>
    </location>
</feature>
<comment type="function">
    <text evidence="2 3 11 12 15 17 20 21">Plays important roles in the innate immune response as effector of glucocorticoid-mediated responses and regulator of the inflammatory process. Has anti-inflammatory activity (PubMed:8425544). Plays a role in glucocorticoid-mediated down-regulation of the early phase of the inflammatory response (By similarity). Contributes to the adaptive immune response by enhancing signaling cascades that are triggered by T-cell activation, regulates differentiation and proliferation of activated T-cells (PubMed:17008549). Promotes the differentiation of T-cells into Th1 cells and negatively regulates differentiation into Th2 cells (PubMed:17008549). Has no effect on unstimulated T cells (PubMed:17008549). Negatively regulates hormone exocytosis via activation of the formyl peptide receptors and reorganization of the actin cytoskeleton (PubMed:19625660). Has high affinity for Ca(2+) and can bind up to eight Ca(2+) ions (By similarity). Displays Ca(2+)-dependent binding to phospholipid membranes (PubMed:2532504, PubMed:8557678). Plays a role in the formation of phagocytic cups and phagosomes. Plays a role in phagocytosis by mediating the Ca(2+)-dependent interaction between phagosomes and the actin cytoskeleton (By similarity).</text>
</comment>
<comment type="function">
    <molecule>Annexin Ac2-26</molecule>
    <text evidence="9 13 16">Functions at least in part by activating the formyl peptide receptors and downstream signaling cascades (PubMed:15187149, PubMed:22879591, PubMed:25664854). Promotes chemotaxis of granulocytes and monocytes via activation of the formyl peptide receptors (PubMed:15187149). Promotes rearrangement of the actin cytoskeleton, cell polarization and cell migration (PubMed:15187149). Promotes resolution of inflammation and wound healing (PubMed:25664854). Acts via neutrophil N-formyl peptide receptors to enhance the release of CXCL2 (PubMed:22879591).</text>
</comment>
<comment type="subunit">
    <text evidence="2 3 7 15 21">Homodimer; non-covalently linked (By similarity). Homodimer; linked by transglutamylation (PubMed:2532504). Homodimers linked by transglutamylation are observed in placenta, but not in other tissues (PubMed:2532504). Interacts with S100A11 (PubMed:10673436, PubMed:8557678). Heterotetramer, formed by two molecules each of S100A11 and ANXA1 (PubMed:10673436). Interacts with DYSF (By similarity). Interacts with EGFR (By similarity).</text>
</comment>
<comment type="interaction">
    <interactant intactId="EBI-354007">
        <id>P04083</id>
    </interactant>
    <interactant intactId="EBI-297353">
        <id>P00533</id>
        <label>EGFR</label>
    </interactant>
    <organismsDiffer>false</organismsDiffer>
    <experiments>3</experiments>
</comment>
<comment type="interaction">
    <interactant intactId="EBI-354007">
        <id>P04083</id>
    </interactant>
    <interactant intactId="EBI-10314666">
        <id>Q9NVM1</id>
        <label>EVA1B</label>
    </interactant>
    <organismsDiffer>false</organismsDiffer>
    <experiments>3</experiments>
</comment>
<comment type="interaction">
    <interactant intactId="EBI-354007">
        <id>P04083</id>
    </interactant>
    <interactant intactId="EBI-81279">
        <id>Q9Y6K9</id>
        <label>IKBKG</label>
    </interactant>
    <organismsDiffer>false</organismsDiffer>
    <experiments>6</experiments>
</comment>
<comment type="interaction">
    <interactant intactId="EBI-354007">
        <id>P04083</id>
    </interactant>
    <interactant intactId="EBI-11750531">
        <id>Q6P5S2</id>
        <label>LEG1</label>
    </interactant>
    <organismsDiffer>false</organismsDiffer>
    <experiments>3</experiments>
</comment>
<comment type="interaction">
    <interactant intactId="EBI-354007">
        <id>P04083</id>
    </interactant>
    <interactant intactId="EBI-11024283">
        <id>Q9C0E8-2</id>
        <label>LNPK</label>
    </interactant>
    <organismsDiffer>false</organismsDiffer>
    <experiments>3</experiments>
</comment>
<comment type="interaction">
    <interactant intactId="EBI-354007">
        <id>P04083</id>
    </interactant>
    <interactant intactId="EBI-358507">
        <id>Q13546</id>
        <label>RIPK1</label>
    </interactant>
    <organismsDiffer>false</organismsDiffer>
    <experiments>5</experiments>
</comment>
<comment type="interaction">
    <interactant intactId="EBI-354007">
        <id>P04083</id>
    </interactant>
    <interactant intactId="EBI-25830993">
        <id>Q96EF9</id>
        <label>ZHX1-C8orf76</label>
    </interactant>
    <organismsDiffer>false</organismsDiffer>
    <experiments>3</experiments>
</comment>
<comment type="interaction">
    <interactant intactId="EBI-354007">
        <id>P04083</id>
    </interactant>
    <interactant intactId="EBI-27033737">
        <id>A0A0F6AZQ1</id>
        <label>pipB</label>
    </interactant>
    <organismsDiffer>true</organismsDiffer>
    <experiments>2</experiments>
</comment>
<comment type="interaction">
    <interactant intactId="EBI-354007">
        <id>P04083</id>
    </interactant>
    <interactant intactId="EBI-27033185">
        <id>A0A0F6B5H5</id>
        <label>pipB2</label>
    </interactant>
    <organismsDiffer>true</organismsDiffer>
    <experiments>2</experiments>
</comment>
<comment type="interaction">
    <interactant intactId="EBI-354007">
        <id>P04083</id>
    </interactant>
    <interactant intactId="EBI-10760263">
        <id>A0A0F6B1Q8</id>
        <label>sseJ</label>
    </interactant>
    <organismsDiffer>true</organismsDiffer>
    <experiments>3</experiments>
</comment>
<comment type="subcellular location">
    <subcellularLocation>
        <location evidence="8 12">Nucleus</location>
    </subcellularLocation>
    <subcellularLocation>
        <location evidence="8 11 12">Cytoplasm</location>
    </subcellularLocation>
    <subcellularLocation>
        <location evidence="4">Cell projection</location>
        <location evidence="4">Cilium</location>
    </subcellularLocation>
    <subcellularLocation>
        <location evidence="8">Cell membrane</location>
    </subcellularLocation>
    <subcellularLocation>
        <location evidence="11 15 21">Membrane</location>
        <topology evidence="15 21">Peripheral membrane protein</topology>
    </subcellularLocation>
    <subcellularLocation>
        <location evidence="1">Endosome membrane</location>
        <topology evidence="1">Peripheral membrane protein</topology>
    </subcellularLocation>
    <subcellularLocation>
        <location evidence="5">Basolateral cell membrane</location>
    </subcellularLocation>
    <subcellularLocation>
        <location evidence="2">Apical cell membrane</location>
    </subcellularLocation>
    <subcellularLocation>
        <location evidence="2">Lateral cell membrane</location>
    </subcellularLocation>
    <subcellularLocation>
        <location evidence="11 12 16">Secreted</location>
    </subcellularLocation>
    <subcellularLocation>
        <location evidence="16">Secreted</location>
        <location evidence="16">Extracellular space</location>
    </subcellularLocation>
    <subcellularLocation>
        <location evidence="8 12 16">Cell membrane</location>
        <topology evidence="8 12 16">Peripheral membrane protein</topology>
        <orientation evidence="8 12 16">Extracellular side</orientation>
    </subcellularLocation>
    <subcellularLocation>
        <location evidence="16">Secreted</location>
        <location evidence="16">Extracellular exosome</location>
    </subcellularLocation>
    <subcellularLocation>
        <location evidence="8">Cytoplasmic vesicle</location>
        <location evidence="8">Secretory vesicle lumen</location>
    </subcellularLocation>
    <subcellularLocation>
        <location evidence="2">Cell projection</location>
        <location evidence="2">Phagocytic cup</location>
    </subcellularLocation>
    <subcellularLocation>
        <location evidence="3">Early endosome</location>
    </subcellularLocation>
    <subcellularLocation>
        <location evidence="3">Cytoplasmic vesicle membrane</location>
        <topology evidence="3">Peripheral membrane protein</topology>
    </subcellularLocation>
    <text evidence="2 8 11 15 16 18 21">Secreted, at least in part via exosomes and other secretory vesicles. Detected in exosomes and other extracellular vesicles (PubMed:25664854). Alternatively, the secretion is dependent on protein unfolding and facilitated by the cargo receptor TMED10; it results in the protein translocation from the cytoplasm into ERGIC (endoplasmic reticulum-Golgi intermediate compartment) followed by vesicle entry and secretion (PubMed:32272059). Detected in gelatinase granules in resting neutrophils (PubMed:10772777). Secretion is increased in response to wounding and inflammation (PubMed:25664854). Secretion is increased upon T-cell activation (PubMed:17008549). Neutrophil adhesion to endothelial cells stimulates secretion via gelatinase granules, but foreign particle phagocytosis has no effect (PubMed:10772777). Colocalizes with actin fibers at phagocytic cups (By similarity). Displays calcium-dependent binding to phospholipid membranes (PubMed:2532504, PubMed:8557678).</text>
</comment>
<comment type="tissue specificity">
    <text evidence="15 17">Detected in resting neutrophils (PubMed:10772777). Detected in peripheral blood T-cells (PubMed:17008549). Detected in extracellular vesicles in blood serum from patients with inflammatory bowel disease, but not in serum from healthy donors (PubMed:25664854). Detected in placenta (at protein level) (PubMed:2532504). Detected in liver.</text>
</comment>
<comment type="domain">
    <text evidence="3">The full-length protein can bind eight Ca(2+) ions via the annexin repeats. Calcium binding causes a major conformation change that modifies dimer contacts and leads to surface exposure of the N-terminal phosphorylation sites; in the absence of Ca(2+), these sites are buried in the interior of the protein core. The N-terminal region becomes disordered in response to calcium-binding.</text>
</comment>
<comment type="PTM">
    <text evidence="10 14 15">Phosphorylated by protein kinase C, EGFR and TRPM7 (PubMed:15485879, PubMed:2457390). Phosphorylated in response to EGF treatment (PubMed:2532504).</text>
</comment>
<comment type="PTM">
    <text evidence="2">Sumoylated.</text>
</comment>
<comment type="PTM">
    <text evidence="13">Proteolytically cleaved by cathepsin CTSG to release the active N-terminal peptide Ac2-26.</text>
</comment>
<comment type="pharmaceutical">
    <text evidence="24">Peptides based on the N-terminal sequence might be used for the treatment of inflammation, e.g. in chronic bowel diseases and in rheumatoid arthritis.</text>
</comment>
<comment type="miscellaneous">
    <text evidence="17 20 24">Was originally identified as calcium and phospholipid binding protein that displays Ca(2+)-dependent binding to phospholipid membranes and can promote membrane aggregation in vitro. Was initially identified as inhibitor of phospholipase A2 activity (in vitro) (PubMed:2936963, PubMed:8425544). Inhibition of phospholipase activity is mediated via its phospholipid binding activity that limits the access of phospholipase to its substrates.</text>
</comment>
<comment type="similarity">
    <text evidence="6 24">Belongs to the annexin family.</text>
</comment>
<comment type="online information" name="Atlas of Genetics and Cytogenetics in Oncology and Haematology">
    <link uri="https://atlasgeneticsoncology.org/gene/653/ANXA1"/>
</comment>